<sequence>MVIYCNLHTVIMNIFYNNIHRCFKDTPLHKAVMLPDAVERIRMFVSKGADINVISDFKKTALHYAAKKLATPEVLKTLIYLGTNVNVTDMFESTPLHYAVQENGLEATKKLLDLGADPNTKYMNGQTPLHCAAMVIPDGPELVRILVEYGANVNALDNKHNTPLALAAELSNTNKTIETLIELGADVKIKNNDGITPLHLAAKSSSDSKTVETLILHGADVNATCSEGNTPLHDAATSYELSNTIEMLIEYGAEVNAANSVGDTPLHCAARSRNPVHKLKTLIAHGSNVNAVNGISVTPLHLATYSDNATEALKVLIEHGAEVNSVDIYGRTPMHYISRSYSSQSLKTAVELLVEHGADIEAKNVIGGTPLSSACNNIEYDLRLIECFIEYGADINTRDIRDETPLYSAIKYPEIVNLLMNYSASTNITNKSNITPLESAIANCIGSAEIIVTQIILDAFRFPDIKNDAIFIRNMKTIEECTMLIDVKESCEYDINKMRSIKFNNMYGLDIFIRSNNINLLSSLVSNVEDIYLEPGCFLVYGNKLRKSVYAARKRLSLLKNSISILSNITTDGYWNALPIELKYNILAMLGDNDLFNIVRNCS</sequence>
<reference key="1">
    <citation type="journal article" date="2000" name="J. Virol.">
        <title>The genome of fowlpox virus.</title>
        <authorList>
            <person name="Afonso C.L."/>
            <person name="Tulman E.R."/>
            <person name="Lu Z."/>
            <person name="Zsak L."/>
            <person name="Kutish G.F."/>
            <person name="Rock D.L."/>
        </authorList>
    </citation>
    <scope>NUCLEOTIDE SEQUENCE [LARGE SCALE GENOMIC DNA]</scope>
</reference>
<gene>
    <name type="ordered locus">FPV162</name>
</gene>
<accession>Q9J569</accession>
<proteinExistence type="predicted"/>
<feature type="chain" id="PRO_0000067112" description="Putative ankyrin repeat protein FPV162">
    <location>
        <begin position="1"/>
        <end position="603"/>
    </location>
</feature>
<feature type="repeat" description="ANK 1">
    <location>
        <begin position="23"/>
        <end position="53"/>
    </location>
</feature>
<feature type="repeat" description="ANK 2">
    <location>
        <begin position="57"/>
        <end position="87"/>
    </location>
</feature>
<feature type="repeat" description="ANK 3">
    <location>
        <begin position="91"/>
        <end position="120"/>
    </location>
</feature>
<feature type="repeat" description="ANK 4">
    <location>
        <begin position="124"/>
        <end position="155"/>
    </location>
</feature>
<feature type="repeat" description="ANK 5">
    <location>
        <begin position="159"/>
        <end position="189"/>
    </location>
</feature>
<feature type="repeat" description="ANK 6">
    <location>
        <begin position="193"/>
        <end position="223"/>
    </location>
</feature>
<feature type="repeat" description="ANK 7">
    <location>
        <begin position="227"/>
        <end position="257"/>
    </location>
</feature>
<feature type="repeat" description="ANK 8">
    <location>
        <begin position="261"/>
        <end position="291"/>
    </location>
</feature>
<feature type="repeat" description="ANK 9">
    <location>
        <begin position="295"/>
        <end position="325"/>
    </location>
</feature>
<feature type="repeat" description="ANK 10">
    <location>
        <begin position="329"/>
        <end position="362"/>
    </location>
</feature>
<feature type="repeat" description="ANK 11">
    <location>
        <begin position="366"/>
        <end position="397"/>
    </location>
</feature>
<feature type="repeat" description="ANK 12">
    <location>
        <begin position="401"/>
        <end position="428"/>
    </location>
</feature>
<feature type="repeat" description="ANK 13">
    <location>
        <begin position="432"/>
        <end position="467"/>
    </location>
</feature>
<feature type="repeat" description="ANK 14">
    <location>
        <begin position="504"/>
        <end position="533"/>
    </location>
</feature>
<name>V162_FOWPN</name>
<keyword id="KW-0040">ANK repeat</keyword>
<keyword id="KW-1185">Reference proteome</keyword>
<keyword id="KW-0677">Repeat</keyword>
<organismHost>
    <name type="scientific">Vertebrata</name>
    <dbReference type="NCBI Taxonomy" id="7742"/>
</organismHost>
<protein>
    <recommendedName>
        <fullName>Putative ankyrin repeat protein FPV162</fullName>
    </recommendedName>
</protein>
<dbReference type="EMBL" id="AF198100">
    <property type="protein sequence ID" value="AAF44506.1"/>
    <property type="molecule type" value="Genomic_DNA"/>
</dbReference>
<dbReference type="RefSeq" id="NP_039125.1">
    <property type="nucleotide sequence ID" value="NC_002188.1"/>
</dbReference>
<dbReference type="SMR" id="Q9J569"/>
<dbReference type="GeneID" id="1486710"/>
<dbReference type="KEGG" id="vg:1486710"/>
<dbReference type="Proteomes" id="UP000008597">
    <property type="component" value="Segment"/>
</dbReference>
<dbReference type="Gene3D" id="1.25.40.20">
    <property type="entry name" value="Ankyrin repeat-containing domain"/>
    <property type="match status" value="5"/>
</dbReference>
<dbReference type="InterPro" id="IPR002110">
    <property type="entry name" value="Ankyrin_rpt"/>
</dbReference>
<dbReference type="InterPro" id="IPR036770">
    <property type="entry name" value="Ankyrin_rpt-contain_sf"/>
</dbReference>
<dbReference type="InterPro" id="IPR050745">
    <property type="entry name" value="Multifunctional_regulatory"/>
</dbReference>
<dbReference type="InterPro" id="IPR018272">
    <property type="entry name" value="PRANC_domain"/>
</dbReference>
<dbReference type="PANTHER" id="PTHR24189:SF50">
    <property type="entry name" value="ANKYRIN REPEAT AND SOCS BOX PROTEIN 2"/>
    <property type="match status" value="1"/>
</dbReference>
<dbReference type="PANTHER" id="PTHR24189">
    <property type="entry name" value="MYOTROPHIN"/>
    <property type="match status" value="1"/>
</dbReference>
<dbReference type="Pfam" id="PF12796">
    <property type="entry name" value="Ank_2"/>
    <property type="match status" value="4"/>
</dbReference>
<dbReference type="Pfam" id="PF09372">
    <property type="entry name" value="PRANC"/>
    <property type="match status" value="1"/>
</dbReference>
<dbReference type="PRINTS" id="PR01415">
    <property type="entry name" value="ANKYRIN"/>
</dbReference>
<dbReference type="SMART" id="SM00248">
    <property type="entry name" value="ANK"/>
    <property type="match status" value="13"/>
</dbReference>
<dbReference type="SUPFAM" id="SSF48403">
    <property type="entry name" value="Ankyrin repeat"/>
    <property type="match status" value="1"/>
</dbReference>
<dbReference type="SUPFAM" id="SSF140860">
    <property type="entry name" value="Pseudo ankyrin repeat-like"/>
    <property type="match status" value="1"/>
</dbReference>
<dbReference type="PROSITE" id="PS50297">
    <property type="entry name" value="ANK_REP_REGION"/>
    <property type="match status" value="1"/>
</dbReference>
<dbReference type="PROSITE" id="PS50088">
    <property type="entry name" value="ANK_REPEAT"/>
    <property type="match status" value="11"/>
</dbReference>
<organism>
    <name type="scientific">Fowlpox virus (strain NVSL)</name>
    <name type="common">FPV</name>
    <dbReference type="NCBI Taxonomy" id="928301"/>
    <lineage>
        <taxon>Viruses</taxon>
        <taxon>Varidnaviria</taxon>
        <taxon>Bamfordvirae</taxon>
        <taxon>Nucleocytoviricota</taxon>
        <taxon>Pokkesviricetes</taxon>
        <taxon>Chitovirales</taxon>
        <taxon>Poxviridae</taxon>
        <taxon>Chordopoxvirinae</taxon>
        <taxon>Avipoxvirus</taxon>
        <taxon>Fowlpox virus</taxon>
    </lineage>
</organism>